<name>LACB_STRZP</name>
<evidence type="ECO:0000255" key="1">
    <source>
        <dbReference type="HAMAP-Rule" id="MF_01556"/>
    </source>
</evidence>
<protein>
    <recommendedName>
        <fullName evidence="1">Galactose-6-phosphate isomerase subunit LacB</fullName>
        <ecNumber evidence="1">5.3.1.26</ecNumber>
    </recommendedName>
</protein>
<accession>C1CKT8</accession>
<proteinExistence type="inferred from homology"/>
<sequence>MRIAIGCDHIVTDEKMAVSEFLKSKGYEVIDFGTYDHTRTHYPIFGKKVGEAVTSGQADLGVCICGTGVGINNAVNKVPGVRSALVRDMTTALYAKEQLNANVIGFGGKITGELLMCDIIEAFIHAEYKPSEENKKLIAKIEHLESHNAQQTDANFFTEFLEKWDRGEYHD</sequence>
<reference key="1">
    <citation type="journal article" date="2010" name="Genome Biol.">
        <title>Structure and dynamics of the pan-genome of Streptococcus pneumoniae and closely related species.</title>
        <authorList>
            <person name="Donati C."/>
            <person name="Hiller N.L."/>
            <person name="Tettelin H."/>
            <person name="Muzzi A."/>
            <person name="Croucher N.J."/>
            <person name="Angiuoli S.V."/>
            <person name="Oggioni M."/>
            <person name="Dunning Hotopp J.C."/>
            <person name="Hu F.Z."/>
            <person name="Riley D.R."/>
            <person name="Covacci A."/>
            <person name="Mitchell T.J."/>
            <person name="Bentley S.D."/>
            <person name="Kilian M."/>
            <person name="Ehrlich G.D."/>
            <person name="Rappuoli R."/>
            <person name="Moxon E.R."/>
            <person name="Masignani V."/>
        </authorList>
    </citation>
    <scope>NUCLEOTIDE SEQUENCE [LARGE SCALE GENOMIC DNA]</scope>
    <source>
        <strain>P1031</strain>
    </source>
</reference>
<organism>
    <name type="scientific">Streptococcus pneumoniae (strain P1031)</name>
    <dbReference type="NCBI Taxonomy" id="488223"/>
    <lineage>
        <taxon>Bacteria</taxon>
        <taxon>Bacillati</taxon>
        <taxon>Bacillota</taxon>
        <taxon>Bacilli</taxon>
        <taxon>Lactobacillales</taxon>
        <taxon>Streptococcaceae</taxon>
        <taxon>Streptococcus</taxon>
    </lineage>
</organism>
<comment type="catalytic activity">
    <reaction evidence="1">
        <text>aldehydo-D-galactose 6-phosphate = keto-D-tagatose 6-phosphate</text>
        <dbReference type="Rhea" id="RHEA:13033"/>
        <dbReference type="ChEBI" id="CHEBI:58255"/>
        <dbReference type="ChEBI" id="CHEBI:134283"/>
        <dbReference type="EC" id="5.3.1.26"/>
    </reaction>
</comment>
<comment type="pathway">
    <text evidence="1">Carbohydrate metabolism; D-galactose 6-phosphate degradation; D-tagatose 6-phosphate from D-galactose 6-phosphate: step 1/1.</text>
</comment>
<comment type="subunit">
    <text evidence="1">Heteromultimeric protein consisting of LacA and LacB.</text>
</comment>
<comment type="similarity">
    <text evidence="1">Belongs to the LacAB/RpiB family.</text>
</comment>
<feature type="chain" id="PRO_1000185406" description="Galactose-6-phosphate isomerase subunit LacB">
    <location>
        <begin position="1"/>
        <end position="171"/>
    </location>
</feature>
<gene>
    <name evidence="1" type="primary">lacB</name>
    <name type="ordered locus">SPP_1233</name>
</gene>
<dbReference type="EC" id="5.3.1.26" evidence="1"/>
<dbReference type="EMBL" id="CP000920">
    <property type="protein sequence ID" value="ACO20644.1"/>
    <property type="molecule type" value="Genomic_DNA"/>
</dbReference>
<dbReference type="RefSeq" id="WP_001216910.1">
    <property type="nucleotide sequence ID" value="NC_012467.1"/>
</dbReference>
<dbReference type="SMR" id="C1CKT8"/>
<dbReference type="KEGG" id="spp:SPP_1233"/>
<dbReference type="HOGENOM" id="CLU_091396_2_0_9"/>
<dbReference type="UniPathway" id="UPA00702">
    <property type="reaction ID" value="UER00714"/>
</dbReference>
<dbReference type="GO" id="GO:0050044">
    <property type="term" value="F:galactose-6-phosphate isomerase activity"/>
    <property type="evidence" value="ECO:0007669"/>
    <property type="project" value="UniProtKB-UniRule"/>
</dbReference>
<dbReference type="GO" id="GO:0004751">
    <property type="term" value="F:ribose-5-phosphate isomerase activity"/>
    <property type="evidence" value="ECO:0007669"/>
    <property type="project" value="TreeGrafter"/>
</dbReference>
<dbReference type="GO" id="GO:0019316">
    <property type="term" value="P:D-allose catabolic process"/>
    <property type="evidence" value="ECO:0007669"/>
    <property type="project" value="TreeGrafter"/>
</dbReference>
<dbReference type="GO" id="GO:0019388">
    <property type="term" value="P:galactose catabolic process"/>
    <property type="evidence" value="ECO:0007669"/>
    <property type="project" value="UniProtKB-UniPathway"/>
</dbReference>
<dbReference type="GO" id="GO:0019512">
    <property type="term" value="P:lactose catabolic process via tagatose-6-phosphate"/>
    <property type="evidence" value="ECO:0007669"/>
    <property type="project" value="UniProtKB-UniRule"/>
</dbReference>
<dbReference type="GO" id="GO:0009052">
    <property type="term" value="P:pentose-phosphate shunt, non-oxidative branch"/>
    <property type="evidence" value="ECO:0007669"/>
    <property type="project" value="TreeGrafter"/>
</dbReference>
<dbReference type="Gene3D" id="3.40.1400.10">
    <property type="entry name" value="Sugar-phosphate isomerase, RpiB/LacA/LacB"/>
    <property type="match status" value="1"/>
</dbReference>
<dbReference type="HAMAP" id="MF_01556">
    <property type="entry name" value="LacB"/>
    <property type="match status" value="1"/>
</dbReference>
<dbReference type="InterPro" id="IPR004784">
    <property type="entry name" value="LacB"/>
</dbReference>
<dbReference type="InterPro" id="IPR003500">
    <property type="entry name" value="RpiB_LacA_LacB"/>
</dbReference>
<dbReference type="InterPro" id="IPR036569">
    <property type="entry name" value="RpiB_LacA_LacB_sf"/>
</dbReference>
<dbReference type="NCBIfam" id="TIGR01119">
    <property type="entry name" value="lacB"/>
    <property type="match status" value="1"/>
</dbReference>
<dbReference type="NCBIfam" id="NF004051">
    <property type="entry name" value="PRK05571.1"/>
    <property type="match status" value="1"/>
</dbReference>
<dbReference type="NCBIfam" id="NF006381">
    <property type="entry name" value="PRK08622.1"/>
    <property type="match status" value="1"/>
</dbReference>
<dbReference type="NCBIfam" id="NF009258">
    <property type="entry name" value="PRK12615.1"/>
    <property type="match status" value="1"/>
</dbReference>
<dbReference type="NCBIfam" id="TIGR00689">
    <property type="entry name" value="rpiB_lacA_lacB"/>
    <property type="match status" value="1"/>
</dbReference>
<dbReference type="PANTHER" id="PTHR30345:SF0">
    <property type="entry name" value="DNA DAMAGE-REPAIR_TOLERATION PROTEIN DRT102"/>
    <property type="match status" value="1"/>
</dbReference>
<dbReference type="PANTHER" id="PTHR30345">
    <property type="entry name" value="RIBOSE-5-PHOSPHATE ISOMERASE B"/>
    <property type="match status" value="1"/>
</dbReference>
<dbReference type="Pfam" id="PF02502">
    <property type="entry name" value="LacAB_rpiB"/>
    <property type="match status" value="1"/>
</dbReference>
<dbReference type="PIRSF" id="PIRSF005384">
    <property type="entry name" value="RpiB_LacA_B"/>
    <property type="match status" value="1"/>
</dbReference>
<dbReference type="SUPFAM" id="SSF89623">
    <property type="entry name" value="Ribose/Galactose isomerase RpiB/AlsB"/>
    <property type="match status" value="1"/>
</dbReference>
<keyword id="KW-0413">Isomerase</keyword>
<keyword id="KW-0423">Lactose metabolism</keyword>